<keyword id="KW-0067">ATP-binding</keyword>
<keyword id="KW-0963">Cytoplasm</keyword>
<keyword id="KW-0418">Kinase</keyword>
<keyword id="KW-0547">Nucleotide-binding</keyword>
<keyword id="KW-0808">Transferase</keyword>
<comment type="function">
    <text evidence="1">Essential for recycling GMP and indirectly, cGMP.</text>
</comment>
<comment type="catalytic activity">
    <reaction evidence="1">
        <text>GMP + ATP = GDP + ADP</text>
        <dbReference type="Rhea" id="RHEA:20780"/>
        <dbReference type="ChEBI" id="CHEBI:30616"/>
        <dbReference type="ChEBI" id="CHEBI:58115"/>
        <dbReference type="ChEBI" id="CHEBI:58189"/>
        <dbReference type="ChEBI" id="CHEBI:456216"/>
        <dbReference type="EC" id="2.7.4.8"/>
    </reaction>
</comment>
<comment type="subcellular location">
    <subcellularLocation>
        <location evidence="1">Cytoplasm</location>
    </subcellularLocation>
</comment>
<comment type="similarity">
    <text evidence="1">Belongs to the guanylate kinase family.</text>
</comment>
<organism>
    <name type="scientific">Rickettsia felis (strain ATCC VR-1525 / URRWXCal2)</name>
    <name type="common">Rickettsia azadi</name>
    <dbReference type="NCBI Taxonomy" id="315456"/>
    <lineage>
        <taxon>Bacteria</taxon>
        <taxon>Pseudomonadati</taxon>
        <taxon>Pseudomonadota</taxon>
        <taxon>Alphaproteobacteria</taxon>
        <taxon>Rickettsiales</taxon>
        <taxon>Rickettsiaceae</taxon>
        <taxon>Rickettsieae</taxon>
        <taxon>Rickettsia</taxon>
        <taxon>spotted fever group</taxon>
    </lineage>
</organism>
<name>KGUA_RICFE</name>
<gene>
    <name evidence="1" type="primary">gmk</name>
    <name type="ordered locus">RF_1229</name>
</gene>
<proteinExistence type="inferred from homology"/>
<feature type="chain" id="PRO_0000266389" description="Guanylate kinase">
    <location>
        <begin position="1"/>
        <end position="192"/>
    </location>
</feature>
<feature type="domain" description="Guanylate kinase-like" evidence="1">
    <location>
        <begin position="7"/>
        <end position="185"/>
    </location>
</feature>
<feature type="binding site" evidence="1">
    <location>
        <begin position="14"/>
        <end position="21"/>
    </location>
    <ligand>
        <name>ATP</name>
        <dbReference type="ChEBI" id="CHEBI:30616"/>
    </ligand>
</feature>
<protein>
    <recommendedName>
        <fullName evidence="1">Guanylate kinase</fullName>
        <ecNumber evidence="1">2.7.4.8</ecNumber>
    </recommendedName>
    <alternativeName>
        <fullName evidence="1">GMP kinase</fullName>
    </alternativeName>
</protein>
<reference key="1">
    <citation type="journal article" date="2005" name="PLoS Biol.">
        <title>The genome sequence of Rickettsia felis identifies the first putative conjugative plasmid in an obligate intracellular parasite.</title>
        <authorList>
            <person name="Ogata H."/>
            <person name="Renesto P."/>
            <person name="Audic S."/>
            <person name="Robert C."/>
            <person name="Blanc G."/>
            <person name="Fournier P.-E."/>
            <person name="Parinello H."/>
            <person name="Claverie J.-M."/>
            <person name="Raoult D."/>
        </authorList>
    </citation>
    <scope>NUCLEOTIDE SEQUENCE [LARGE SCALE GENOMIC DNA]</scope>
    <source>
        <strain>ATCC VR-1525 / URRWXCal2</strain>
    </source>
</reference>
<dbReference type="EC" id="2.7.4.8" evidence="1"/>
<dbReference type="EMBL" id="CP000053">
    <property type="protein sequence ID" value="AAY62080.1"/>
    <property type="molecule type" value="Genomic_DNA"/>
</dbReference>
<dbReference type="SMR" id="Q4UK55"/>
<dbReference type="STRING" id="315456.RF_1229"/>
<dbReference type="KEGG" id="rfe:RF_1229"/>
<dbReference type="eggNOG" id="COG0194">
    <property type="taxonomic scope" value="Bacteria"/>
</dbReference>
<dbReference type="HOGENOM" id="CLU_001715_1_0_5"/>
<dbReference type="OrthoDB" id="9808150at2"/>
<dbReference type="Proteomes" id="UP000008548">
    <property type="component" value="Chromosome"/>
</dbReference>
<dbReference type="GO" id="GO:0005829">
    <property type="term" value="C:cytosol"/>
    <property type="evidence" value="ECO:0007669"/>
    <property type="project" value="TreeGrafter"/>
</dbReference>
<dbReference type="GO" id="GO:0005524">
    <property type="term" value="F:ATP binding"/>
    <property type="evidence" value="ECO:0007669"/>
    <property type="project" value="UniProtKB-UniRule"/>
</dbReference>
<dbReference type="GO" id="GO:0004385">
    <property type="term" value="F:guanylate kinase activity"/>
    <property type="evidence" value="ECO:0007669"/>
    <property type="project" value="UniProtKB-UniRule"/>
</dbReference>
<dbReference type="CDD" id="cd00071">
    <property type="entry name" value="GMPK"/>
    <property type="match status" value="1"/>
</dbReference>
<dbReference type="FunFam" id="3.30.63.10:FF:000002">
    <property type="entry name" value="Guanylate kinase 1"/>
    <property type="match status" value="1"/>
</dbReference>
<dbReference type="Gene3D" id="3.30.63.10">
    <property type="entry name" value="Guanylate Kinase phosphate binding domain"/>
    <property type="match status" value="1"/>
</dbReference>
<dbReference type="Gene3D" id="3.40.50.300">
    <property type="entry name" value="P-loop containing nucleotide triphosphate hydrolases"/>
    <property type="match status" value="1"/>
</dbReference>
<dbReference type="HAMAP" id="MF_00328">
    <property type="entry name" value="Guanylate_kinase"/>
    <property type="match status" value="1"/>
</dbReference>
<dbReference type="InterPro" id="IPR008145">
    <property type="entry name" value="GK/Ca_channel_bsu"/>
</dbReference>
<dbReference type="InterPro" id="IPR008144">
    <property type="entry name" value="Guanylate_kin-like_dom"/>
</dbReference>
<dbReference type="InterPro" id="IPR017665">
    <property type="entry name" value="Guanylate_kinase"/>
</dbReference>
<dbReference type="InterPro" id="IPR020590">
    <property type="entry name" value="Guanylate_kinase_CS"/>
</dbReference>
<dbReference type="InterPro" id="IPR027417">
    <property type="entry name" value="P-loop_NTPase"/>
</dbReference>
<dbReference type="NCBIfam" id="TIGR03263">
    <property type="entry name" value="guanyl_kin"/>
    <property type="match status" value="1"/>
</dbReference>
<dbReference type="PANTHER" id="PTHR23117:SF13">
    <property type="entry name" value="GUANYLATE KINASE"/>
    <property type="match status" value="1"/>
</dbReference>
<dbReference type="PANTHER" id="PTHR23117">
    <property type="entry name" value="GUANYLATE KINASE-RELATED"/>
    <property type="match status" value="1"/>
</dbReference>
<dbReference type="Pfam" id="PF00625">
    <property type="entry name" value="Guanylate_kin"/>
    <property type="match status" value="1"/>
</dbReference>
<dbReference type="SMART" id="SM00072">
    <property type="entry name" value="GuKc"/>
    <property type="match status" value="1"/>
</dbReference>
<dbReference type="SUPFAM" id="SSF52540">
    <property type="entry name" value="P-loop containing nucleoside triphosphate hydrolases"/>
    <property type="match status" value="1"/>
</dbReference>
<dbReference type="PROSITE" id="PS00856">
    <property type="entry name" value="GUANYLATE_KINASE_1"/>
    <property type="match status" value="1"/>
</dbReference>
<dbReference type="PROSITE" id="PS50052">
    <property type="entry name" value="GUANYLATE_KINASE_2"/>
    <property type="match status" value="1"/>
</dbReference>
<accession>Q4UK55</accession>
<evidence type="ECO:0000255" key="1">
    <source>
        <dbReference type="HAMAP-Rule" id="MF_00328"/>
    </source>
</evidence>
<sequence>MTIKNKGLIIILSSPSGTGKSSLAKALLKIDNNLRLSISATTRKPRLGEVEGINYYFKTKLEFEELVKQNKFLEYAKIYDNYYGTPKEYVEMLLNQGLDVLFDIDWQGAKSIKKNATNVVAIFILPPSIEILEQRLRNRATDNEEAIKLRMQSAQNEMSHANEYDYVITNDDFDQTLKKIHEIIVAEREKAF</sequence>